<feature type="chain" id="PRO_0000235759" description="Ribonuclease HII">
    <location>
        <begin position="1"/>
        <end position="212"/>
    </location>
</feature>
<feature type="domain" description="RNase H type-2" evidence="2">
    <location>
        <begin position="20"/>
        <end position="209"/>
    </location>
</feature>
<feature type="binding site" evidence="1">
    <location>
        <position position="26"/>
    </location>
    <ligand>
        <name>a divalent metal cation</name>
        <dbReference type="ChEBI" id="CHEBI:60240"/>
    </ligand>
</feature>
<feature type="binding site" evidence="1">
    <location>
        <position position="27"/>
    </location>
    <ligand>
        <name>a divalent metal cation</name>
        <dbReference type="ChEBI" id="CHEBI:60240"/>
    </ligand>
</feature>
<feature type="binding site" evidence="1">
    <location>
        <position position="117"/>
    </location>
    <ligand>
        <name>a divalent metal cation</name>
        <dbReference type="ChEBI" id="CHEBI:60240"/>
    </ligand>
</feature>
<sequence>MEITCPDWTHETAALAEGFTCVVGVDEVGRGPLAGPVTAAAVRLFPGRIPEGLNDSKKLTAPRREMLAAEIHTVAEVSIAHASVEEIDRLNILQASHLAMGRALAGLPSRPDFALIDGHMVPKGLGHRCRAIVKGDALCLSIAAASIVAKVARDRIMVDLEQQHPGYGWRTNAGYGTKDHLQALLNLGPTPHHRRSFKPVHNILYQEASISP</sequence>
<organism>
    <name type="scientific">Cereibacter sphaeroides (strain ATCC 17023 / DSM 158 / JCM 6121 / CCUG 31486 / LMG 2827 / NBRC 12203 / NCIMB 8253 / ATH 2.4.1.)</name>
    <name type="common">Rhodobacter sphaeroides</name>
    <dbReference type="NCBI Taxonomy" id="272943"/>
    <lineage>
        <taxon>Bacteria</taxon>
        <taxon>Pseudomonadati</taxon>
        <taxon>Pseudomonadota</taxon>
        <taxon>Alphaproteobacteria</taxon>
        <taxon>Rhodobacterales</taxon>
        <taxon>Paracoccaceae</taxon>
        <taxon>Cereibacter</taxon>
    </lineage>
</organism>
<comment type="function">
    <text evidence="1">Endonuclease that specifically degrades the RNA of RNA-DNA hybrids.</text>
</comment>
<comment type="catalytic activity">
    <reaction evidence="1">
        <text>Endonucleolytic cleavage to 5'-phosphomonoester.</text>
        <dbReference type="EC" id="3.1.26.4"/>
    </reaction>
</comment>
<comment type="cofactor">
    <cofactor evidence="1">
        <name>Mn(2+)</name>
        <dbReference type="ChEBI" id="CHEBI:29035"/>
    </cofactor>
    <cofactor evidence="1">
        <name>Mg(2+)</name>
        <dbReference type="ChEBI" id="CHEBI:18420"/>
    </cofactor>
    <text evidence="1">Manganese or magnesium. Binds 1 divalent metal ion per monomer in the absence of substrate. May bind a second metal ion after substrate binding.</text>
</comment>
<comment type="subcellular location">
    <subcellularLocation>
        <location evidence="1">Cytoplasm</location>
    </subcellularLocation>
</comment>
<comment type="similarity">
    <text evidence="1">Belongs to the RNase HII family.</text>
</comment>
<reference key="1">
    <citation type="submission" date="2005-09" db="EMBL/GenBank/DDBJ databases">
        <title>Complete sequence of chromosome 1 of Rhodobacter sphaeroides 2.4.1.</title>
        <authorList>
            <person name="Copeland A."/>
            <person name="Lucas S."/>
            <person name="Lapidus A."/>
            <person name="Barry K."/>
            <person name="Detter J.C."/>
            <person name="Glavina T."/>
            <person name="Hammon N."/>
            <person name="Israni S."/>
            <person name="Pitluck S."/>
            <person name="Richardson P."/>
            <person name="Mackenzie C."/>
            <person name="Choudhary M."/>
            <person name="Larimer F."/>
            <person name="Hauser L.J."/>
            <person name="Land M."/>
            <person name="Donohue T.J."/>
            <person name="Kaplan S."/>
        </authorList>
    </citation>
    <scope>NUCLEOTIDE SEQUENCE [LARGE SCALE GENOMIC DNA]</scope>
    <source>
        <strain>ATCC 17023 / DSM 158 / JCM 6121 / CCUG 31486 / LMG 2827 / NBRC 12203 / NCIMB 8253 / ATH 2.4.1.</strain>
    </source>
</reference>
<accession>Q3J6H3</accession>
<dbReference type="EC" id="3.1.26.4" evidence="1"/>
<dbReference type="EMBL" id="CP000143">
    <property type="protein sequence ID" value="ABA77611.1"/>
    <property type="molecule type" value="Genomic_DNA"/>
</dbReference>
<dbReference type="RefSeq" id="WP_002722129.1">
    <property type="nucleotide sequence ID" value="NZ_CP030271.1"/>
</dbReference>
<dbReference type="RefSeq" id="YP_351512.1">
    <property type="nucleotide sequence ID" value="NC_007493.2"/>
</dbReference>
<dbReference type="SMR" id="Q3J6H3"/>
<dbReference type="STRING" id="272943.RSP_1470"/>
<dbReference type="EnsemblBacteria" id="ABA77611">
    <property type="protein sequence ID" value="ABA77611"/>
    <property type="gene ID" value="RSP_1470"/>
</dbReference>
<dbReference type="KEGG" id="rsp:RSP_1470"/>
<dbReference type="PATRIC" id="fig|272943.9.peg.338"/>
<dbReference type="eggNOG" id="COG0164">
    <property type="taxonomic scope" value="Bacteria"/>
</dbReference>
<dbReference type="OrthoDB" id="9803420at2"/>
<dbReference type="PhylomeDB" id="Q3J6H3"/>
<dbReference type="Proteomes" id="UP000002703">
    <property type="component" value="Chromosome 1"/>
</dbReference>
<dbReference type="GO" id="GO:0005737">
    <property type="term" value="C:cytoplasm"/>
    <property type="evidence" value="ECO:0007669"/>
    <property type="project" value="UniProtKB-SubCell"/>
</dbReference>
<dbReference type="GO" id="GO:0032299">
    <property type="term" value="C:ribonuclease H2 complex"/>
    <property type="evidence" value="ECO:0007669"/>
    <property type="project" value="TreeGrafter"/>
</dbReference>
<dbReference type="GO" id="GO:0030145">
    <property type="term" value="F:manganese ion binding"/>
    <property type="evidence" value="ECO:0007669"/>
    <property type="project" value="UniProtKB-UniRule"/>
</dbReference>
<dbReference type="GO" id="GO:0003723">
    <property type="term" value="F:RNA binding"/>
    <property type="evidence" value="ECO:0007669"/>
    <property type="project" value="InterPro"/>
</dbReference>
<dbReference type="GO" id="GO:0004523">
    <property type="term" value="F:RNA-DNA hybrid ribonuclease activity"/>
    <property type="evidence" value="ECO:0007669"/>
    <property type="project" value="UniProtKB-UniRule"/>
</dbReference>
<dbReference type="GO" id="GO:0043137">
    <property type="term" value="P:DNA replication, removal of RNA primer"/>
    <property type="evidence" value="ECO:0007669"/>
    <property type="project" value="TreeGrafter"/>
</dbReference>
<dbReference type="GO" id="GO:0006298">
    <property type="term" value="P:mismatch repair"/>
    <property type="evidence" value="ECO:0007669"/>
    <property type="project" value="TreeGrafter"/>
</dbReference>
<dbReference type="CDD" id="cd07182">
    <property type="entry name" value="RNase_HII_bacteria_HII_like"/>
    <property type="match status" value="1"/>
</dbReference>
<dbReference type="Gene3D" id="3.30.420.10">
    <property type="entry name" value="Ribonuclease H-like superfamily/Ribonuclease H"/>
    <property type="match status" value="1"/>
</dbReference>
<dbReference type="HAMAP" id="MF_00052_B">
    <property type="entry name" value="RNase_HII_B"/>
    <property type="match status" value="1"/>
</dbReference>
<dbReference type="InterPro" id="IPR022898">
    <property type="entry name" value="RNase_HII"/>
</dbReference>
<dbReference type="InterPro" id="IPR001352">
    <property type="entry name" value="RNase_HII/HIII"/>
</dbReference>
<dbReference type="InterPro" id="IPR024567">
    <property type="entry name" value="RNase_HII/HIII_dom"/>
</dbReference>
<dbReference type="InterPro" id="IPR012337">
    <property type="entry name" value="RNaseH-like_sf"/>
</dbReference>
<dbReference type="InterPro" id="IPR036397">
    <property type="entry name" value="RNaseH_sf"/>
</dbReference>
<dbReference type="NCBIfam" id="NF000595">
    <property type="entry name" value="PRK00015.1-3"/>
    <property type="match status" value="1"/>
</dbReference>
<dbReference type="PANTHER" id="PTHR10954">
    <property type="entry name" value="RIBONUCLEASE H2 SUBUNIT A"/>
    <property type="match status" value="1"/>
</dbReference>
<dbReference type="PANTHER" id="PTHR10954:SF18">
    <property type="entry name" value="RIBONUCLEASE HII"/>
    <property type="match status" value="1"/>
</dbReference>
<dbReference type="Pfam" id="PF01351">
    <property type="entry name" value="RNase_HII"/>
    <property type="match status" value="1"/>
</dbReference>
<dbReference type="SUPFAM" id="SSF53098">
    <property type="entry name" value="Ribonuclease H-like"/>
    <property type="match status" value="1"/>
</dbReference>
<dbReference type="PROSITE" id="PS51975">
    <property type="entry name" value="RNASE_H_2"/>
    <property type="match status" value="1"/>
</dbReference>
<protein>
    <recommendedName>
        <fullName evidence="1">Ribonuclease HII</fullName>
        <shortName evidence="1">RNase HII</shortName>
        <ecNumber evidence="1">3.1.26.4</ecNumber>
    </recommendedName>
</protein>
<name>RNH2_CERS4</name>
<proteinExistence type="inferred from homology"/>
<evidence type="ECO:0000255" key="1">
    <source>
        <dbReference type="HAMAP-Rule" id="MF_00052"/>
    </source>
</evidence>
<evidence type="ECO:0000255" key="2">
    <source>
        <dbReference type="PROSITE-ProRule" id="PRU01319"/>
    </source>
</evidence>
<keyword id="KW-0963">Cytoplasm</keyword>
<keyword id="KW-0255">Endonuclease</keyword>
<keyword id="KW-0378">Hydrolase</keyword>
<keyword id="KW-0464">Manganese</keyword>
<keyword id="KW-0479">Metal-binding</keyword>
<keyword id="KW-0540">Nuclease</keyword>
<keyword id="KW-1185">Reference proteome</keyword>
<gene>
    <name evidence="1" type="primary">rnhB</name>
    <name type="ordered locus">RHOS4_00430</name>
    <name type="ORF">RSP_1470</name>
</gene>